<accession>A5UFL3</accession>
<comment type="subcellular location">
    <subcellularLocation>
        <location evidence="1">Cell inner membrane</location>
        <topology evidence="1">Multi-pass membrane protein</topology>
    </subcellularLocation>
</comment>
<comment type="similarity">
    <text evidence="1">Belongs to the UPF0283 family.</text>
</comment>
<evidence type="ECO:0000255" key="1">
    <source>
        <dbReference type="HAMAP-Rule" id="MF_01085"/>
    </source>
</evidence>
<dbReference type="EMBL" id="CP000672">
    <property type="protein sequence ID" value="ABQ99568.1"/>
    <property type="molecule type" value="Genomic_DNA"/>
</dbReference>
<dbReference type="KEGG" id="hiq:CGSHiGG_02710"/>
<dbReference type="HOGENOM" id="CLU_057693_2_0_6"/>
<dbReference type="Proteomes" id="UP000001990">
    <property type="component" value="Chromosome"/>
</dbReference>
<dbReference type="GO" id="GO:0005886">
    <property type="term" value="C:plasma membrane"/>
    <property type="evidence" value="ECO:0007669"/>
    <property type="project" value="UniProtKB-SubCell"/>
</dbReference>
<dbReference type="HAMAP" id="MF_01085">
    <property type="entry name" value="UPF0283"/>
    <property type="match status" value="1"/>
</dbReference>
<dbReference type="InterPro" id="IPR021147">
    <property type="entry name" value="DUF697"/>
</dbReference>
<dbReference type="InterPro" id="IPR006507">
    <property type="entry name" value="UPF0283"/>
</dbReference>
<dbReference type="NCBIfam" id="TIGR01620">
    <property type="entry name" value="hyp_HI0043"/>
    <property type="match status" value="1"/>
</dbReference>
<dbReference type="PANTHER" id="PTHR39342">
    <property type="entry name" value="UPF0283 MEMBRANE PROTEIN YCJF"/>
    <property type="match status" value="1"/>
</dbReference>
<dbReference type="PANTHER" id="PTHR39342:SF1">
    <property type="entry name" value="UPF0283 MEMBRANE PROTEIN YCJF"/>
    <property type="match status" value="1"/>
</dbReference>
<dbReference type="Pfam" id="PF05128">
    <property type="entry name" value="DUF697"/>
    <property type="match status" value="1"/>
</dbReference>
<proteinExistence type="inferred from homology"/>
<feature type="chain" id="PRO_1000064842" description="UPF0283 membrane protein CGSHiGG_02710">
    <location>
        <begin position="1"/>
        <end position="354"/>
    </location>
</feature>
<feature type="transmembrane region" description="Helical" evidence="1">
    <location>
        <begin position="57"/>
        <end position="77"/>
    </location>
</feature>
<feature type="transmembrane region" description="Helical" evidence="1">
    <location>
        <begin position="87"/>
        <end position="107"/>
    </location>
</feature>
<feature type="transmembrane region" description="Helical" evidence="1">
    <location>
        <begin position="211"/>
        <end position="231"/>
    </location>
</feature>
<sequence length="354" mass="40349">MEKQIFEHSVNVEEEHYQPKQEFHNMEAKLDEALDGELLDAQLEQALKPKSSFRKTLLKFTALLFGLATVAQSVQWIWDSYQQHQWIYLAFALVSLIIILLGIKEIICEWRRLVRLKKREQLQQQSQQIWLESAVKNGDVFSVHNAEKSKILCLDIAKSLGLENDSPAVIQWQHQLNEAYSAQEIAHLFSRHVLSSFDAQAKKLISKMAAESAVIVAISPLAVVDMFFIAWRNLRLMNKIAEIYGIELGYFSRIRLLRMVLVNIAFAGATEVAQDIGMDWLSQDVTAKLSTRIAQGIGVGLLTARLGVKAMELCRPLAFQLNEKPKLSYIQQELLSSVKDIVLGKNKIYKKEQI</sequence>
<name>Y2710_HAEIG</name>
<gene>
    <name type="ordered locus">CGSHiGG_02710</name>
</gene>
<organism>
    <name type="scientific">Haemophilus influenzae (strain PittGG)</name>
    <dbReference type="NCBI Taxonomy" id="374931"/>
    <lineage>
        <taxon>Bacteria</taxon>
        <taxon>Pseudomonadati</taxon>
        <taxon>Pseudomonadota</taxon>
        <taxon>Gammaproteobacteria</taxon>
        <taxon>Pasteurellales</taxon>
        <taxon>Pasteurellaceae</taxon>
        <taxon>Haemophilus</taxon>
    </lineage>
</organism>
<protein>
    <recommendedName>
        <fullName evidence="1">UPF0283 membrane protein CGSHiGG_02710</fullName>
    </recommendedName>
</protein>
<reference key="1">
    <citation type="journal article" date="2007" name="Genome Biol.">
        <title>Characterization and modeling of the Haemophilus influenzae core and supragenomes based on the complete genomic sequences of Rd and 12 clinical nontypeable strains.</title>
        <authorList>
            <person name="Hogg J.S."/>
            <person name="Hu F.Z."/>
            <person name="Janto B."/>
            <person name="Boissy R."/>
            <person name="Hayes J."/>
            <person name="Keefe R."/>
            <person name="Post J.C."/>
            <person name="Ehrlich G.D."/>
        </authorList>
    </citation>
    <scope>NUCLEOTIDE SEQUENCE [LARGE SCALE GENOMIC DNA]</scope>
    <source>
        <strain>PittGG</strain>
    </source>
</reference>
<keyword id="KW-0997">Cell inner membrane</keyword>
<keyword id="KW-1003">Cell membrane</keyword>
<keyword id="KW-0472">Membrane</keyword>
<keyword id="KW-0812">Transmembrane</keyword>
<keyword id="KW-1133">Transmembrane helix</keyword>